<reference key="1">
    <citation type="journal article" date="2007" name="Plant Biotechnol. J.">
        <title>The complete nucleotide sequence of the coffee (Coffea arabica L.) chloroplast genome: organization and implications for biotechnology and phylogenetic relationships amongst angiosperms.</title>
        <authorList>
            <person name="Samson N."/>
            <person name="Bausher M.G."/>
            <person name="Lee S.-B."/>
            <person name="Jansen R.K."/>
            <person name="Daniell H."/>
        </authorList>
    </citation>
    <scope>NUCLEOTIDE SEQUENCE [LARGE SCALE GENOMIC DNA]</scope>
</reference>
<protein>
    <recommendedName>
        <fullName evidence="1">Cytochrome b6-f complex subunit 8</fullName>
    </recommendedName>
    <alternativeName>
        <fullName evidence="1">Cytochrome b6-f complex subunit PetN</fullName>
    </alternativeName>
    <alternativeName>
        <fullName evidence="1">Cytochrome b6-f complex subunit VIII</fullName>
    </alternativeName>
</protein>
<feature type="chain" id="PRO_0000275546" description="Cytochrome b6-f complex subunit 8">
    <location>
        <begin position="1"/>
        <end position="29"/>
    </location>
</feature>
<feature type="transmembrane region" description="Helical" evidence="1">
    <location>
        <begin position="3"/>
        <end position="23"/>
    </location>
</feature>
<proteinExistence type="inferred from homology"/>
<dbReference type="EMBL" id="EF044213">
    <property type="protein sequence ID" value="ABJ89672.1"/>
    <property type="molecule type" value="Genomic_DNA"/>
</dbReference>
<dbReference type="RefSeq" id="YP_817475.1">
    <property type="nucleotide sequence ID" value="NC_008535.1"/>
</dbReference>
<dbReference type="SMR" id="A0A328"/>
<dbReference type="GeneID" id="4421795"/>
<dbReference type="Proteomes" id="UP000515148">
    <property type="component" value="Chloroplast Pltd"/>
</dbReference>
<dbReference type="GO" id="GO:0009535">
    <property type="term" value="C:chloroplast thylakoid membrane"/>
    <property type="evidence" value="ECO:0007669"/>
    <property type="project" value="UniProtKB-SubCell"/>
</dbReference>
<dbReference type="GO" id="GO:0009512">
    <property type="term" value="C:cytochrome b6f complex"/>
    <property type="evidence" value="ECO:0007669"/>
    <property type="project" value="InterPro"/>
</dbReference>
<dbReference type="GO" id="GO:0045158">
    <property type="term" value="F:electron transporter, transferring electrons within cytochrome b6/f complex of photosystem II activity"/>
    <property type="evidence" value="ECO:0007669"/>
    <property type="project" value="InterPro"/>
</dbReference>
<dbReference type="GO" id="GO:0017004">
    <property type="term" value="P:cytochrome complex assembly"/>
    <property type="evidence" value="ECO:0007669"/>
    <property type="project" value="UniProtKB-UniRule"/>
</dbReference>
<dbReference type="GO" id="GO:0015979">
    <property type="term" value="P:photosynthesis"/>
    <property type="evidence" value="ECO:0007669"/>
    <property type="project" value="UniProtKB-KW"/>
</dbReference>
<dbReference type="HAMAP" id="MF_00395">
    <property type="entry name" value="Cytb6_f_PetN"/>
    <property type="match status" value="1"/>
</dbReference>
<dbReference type="InterPro" id="IPR036143">
    <property type="entry name" value="Cytochr_b6-f_cplx_su8_sf"/>
</dbReference>
<dbReference type="InterPro" id="IPR005497">
    <property type="entry name" value="Cytochrome_b6-f_cplx_su8"/>
</dbReference>
<dbReference type="Pfam" id="PF03742">
    <property type="entry name" value="PetN"/>
    <property type="match status" value="1"/>
</dbReference>
<dbReference type="SUPFAM" id="SSF103451">
    <property type="entry name" value="PetN subunit of the cytochrome b6f complex"/>
    <property type="match status" value="1"/>
</dbReference>
<name>PETN_COFAR</name>
<sequence>MDIVSLAWASLMVVFTFSLSLVVWGRSGL</sequence>
<gene>
    <name evidence="1" type="primary">petN</name>
</gene>
<geneLocation type="chloroplast"/>
<accession>A0A328</accession>
<evidence type="ECO:0000255" key="1">
    <source>
        <dbReference type="HAMAP-Rule" id="MF_00395"/>
    </source>
</evidence>
<organism>
    <name type="scientific">Coffea arabica</name>
    <name type="common">Arabian coffee</name>
    <dbReference type="NCBI Taxonomy" id="13443"/>
    <lineage>
        <taxon>Eukaryota</taxon>
        <taxon>Viridiplantae</taxon>
        <taxon>Streptophyta</taxon>
        <taxon>Embryophyta</taxon>
        <taxon>Tracheophyta</taxon>
        <taxon>Spermatophyta</taxon>
        <taxon>Magnoliopsida</taxon>
        <taxon>eudicotyledons</taxon>
        <taxon>Gunneridae</taxon>
        <taxon>Pentapetalae</taxon>
        <taxon>asterids</taxon>
        <taxon>lamiids</taxon>
        <taxon>Gentianales</taxon>
        <taxon>Rubiaceae</taxon>
        <taxon>Ixoroideae</taxon>
        <taxon>Gardenieae complex</taxon>
        <taxon>Bertiereae - Coffeeae clade</taxon>
        <taxon>Coffeeae</taxon>
        <taxon>Coffea</taxon>
    </lineage>
</organism>
<comment type="function">
    <text evidence="1">Component of the cytochrome b6-f complex, which mediates electron transfer between photosystem II (PSII) and photosystem I (PSI), cyclic electron flow around PSI, and state transitions.</text>
</comment>
<comment type="subunit">
    <text evidence="1">The 4 large subunits of the cytochrome b6-f complex are cytochrome b6, subunit IV (17 kDa polypeptide, PetD), cytochrome f and the Rieske protein, while the 4 small subunits are PetG, PetL, PetM and PetN. The complex functions as a dimer.</text>
</comment>
<comment type="subcellular location">
    <subcellularLocation>
        <location>Plastid</location>
        <location>Chloroplast thylakoid membrane</location>
        <topology>Single-pass membrane protein</topology>
    </subcellularLocation>
</comment>
<comment type="similarity">
    <text evidence="1">Belongs to the PetN family.</text>
</comment>
<keyword id="KW-0150">Chloroplast</keyword>
<keyword id="KW-0249">Electron transport</keyword>
<keyword id="KW-0472">Membrane</keyword>
<keyword id="KW-0602">Photosynthesis</keyword>
<keyword id="KW-0934">Plastid</keyword>
<keyword id="KW-1185">Reference proteome</keyword>
<keyword id="KW-0793">Thylakoid</keyword>
<keyword id="KW-0812">Transmembrane</keyword>
<keyword id="KW-1133">Transmembrane helix</keyword>
<keyword id="KW-0813">Transport</keyword>